<proteinExistence type="inferred from homology"/>
<keyword id="KW-0488">Methylation</keyword>
<keyword id="KW-1185">Reference proteome</keyword>
<keyword id="KW-0687">Ribonucleoprotein</keyword>
<keyword id="KW-0689">Ribosomal protein</keyword>
<keyword id="KW-0694">RNA-binding</keyword>
<keyword id="KW-0699">rRNA-binding</keyword>
<keyword id="KW-0820">tRNA-binding</keyword>
<sequence>MATINQLVRQPRKRSVEKSDVPALQNCPQRRGVCTRVYTTTPKKPNSALRKVCRVRLTNGFEVSSYIGGEGHNLQEHSVVLIRGGRVKDLPGVRYHTVRGSLDTSGVKGRNQGRSKYGTKRPK</sequence>
<dbReference type="EMBL" id="AE015451">
    <property type="protein sequence ID" value="AAN66079.1"/>
    <property type="molecule type" value="Genomic_DNA"/>
</dbReference>
<dbReference type="RefSeq" id="NP_742615.1">
    <property type="nucleotide sequence ID" value="NC_002947.4"/>
</dbReference>
<dbReference type="RefSeq" id="WP_003255492.1">
    <property type="nucleotide sequence ID" value="NZ_CP169744.1"/>
</dbReference>
<dbReference type="SMR" id="Q88QP0"/>
<dbReference type="STRING" id="160488.PP_0449"/>
<dbReference type="PaxDb" id="160488-PP_0449"/>
<dbReference type="GeneID" id="93675517"/>
<dbReference type="KEGG" id="ppu:PP_0449"/>
<dbReference type="PATRIC" id="fig|160488.4.peg.481"/>
<dbReference type="eggNOG" id="COG0048">
    <property type="taxonomic scope" value="Bacteria"/>
</dbReference>
<dbReference type="HOGENOM" id="CLU_104295_1_2_6"/>
<dbReference type="OrthoDB" id="9802366at2"/>
<dbReference type="PhylomeDB" id="Q88QP0"/>
<dbReference type="BioCyc" id="PPUT160488:G1G01-495-MONOMER"/>
<dbReference type="Proteomes" id="UP000000556">
    <property type="component" value="Chromosome"/>
</dbReference>
<dbReference type="GO" id="GO:0015935">
    <property type="term" value="C:small ribosomal subunit"/>
    <property type="evidence" value="ECO:0007669"/>
    <property type="project" value="InterPro"/>
</dbReference>
<dbReference type="GO" id="GO:0019843">
    <property type="term" value="F:rRNA binding"/>
    <property type="evidence" value="ECO:0007669"/>
    <property type="project" value="UniProtKB-UniRule"/>
</dbReference>
<dbReference type="GO" id="GO:0003735">
    <property type="term" value="F:structural constituent of ribosome"/>
    <property type="evidence" value="ECO:0007669"/>
    <property type="project" value="InterPro"/>
</dbReference>
<dbReference type="GO" id="GO:0000049">
    <property type="term" value="F:tRNA binding"/>
    <property type="evidence" value="ECO:0007669"/>
    <property type="project" value="UniProtKB-UniRule"/>
</dbReference>
<dbReference type="GO" id="GO:0006412">
    <property type="term" value="P:translation"/>
    <property type="evidence" value="ECO:0007669"/>
    <property type="project" value="UniProtKB-UniRule"/>
</dbReference>
<dbReference type="CDD" id="cd03368">
    <property type="entry name" value="Ribosomal_S12"/>
    <property type="match status" value="1"/>
</dbReference>
<dbReference type="FunFam" id="2.40.50.140:FF:000001">
    <property type="entry name" value="30S ribosomal protein S12"/>
    <property type="match status" value="1"/>
</dbReference>
<dbReference type="Gene3D" id="2.40.50.140">
    <property type="entry name" value="Nucleic acid-binding proteins"/>
    <property type="match status" value="1"/>
</dbReference>
<dbReference type="HAMAP" id="MF_00403_B">
    <property type="entry name" value="Ribosomal_uS12_B"/>
    <property type="match status" value="1"/>
</dbReference>
<dbReference type="InterPro" id="IPR012340">
    <property type="entry name" value="NA-bd_OB-fold"/>
</dbReference>
<dbReference type="InterPro" id="IPR006032">
    <property type="entry name" value="Ribosomal_uS12"/>
</dbReference>
<dbReference type="InterPro" id="IPR005679">
    <property type="entry name" value="Ribosomal_uS12_bac"/>
</dbReference>
<dbReference type="NCBIfam" id="TIGR00981">
    <property type="entry name" value="rpsL_bact"/>
    <property type="match status" value="1"/>
</dbReference>
<dbReference type="PANTHER" id="PTHR11652">
    <property type="entry name" value="30S RIBOSOMAL PROTEIN S12 FAMILY MEMBER"/>
    <property type="match status" value="1"/>
</dbReference>
<dbReference type="Pfam" id="PF00164">
    <property type="entry name" value="Ribosom_S12_S23"/>
    <property type="match status" value="1"/>
</dbReference>
<dbReference type="PIRSF" id="PIRSF002133">
    <property type="entry name" value="Ribosomal_S12/S23"/>
    <property type="match status" value="1"/>
</dbReference>
<dbReference type="PRINTS" id="PR01034">
    <property type="entry name" value="RIBOSOMALS12"/>
</dbReference>
<dbReference type="SUPFAM" id="SSF50249">
    <property type="entry name" value="Nucleic acid-binding proteins"/>
    <property type="match status" value="1"/>
</dbReference>
<dbReference type="PROSITE" id="PS00055">
    <property type="entry name" value="RIBOSOMAL_S12"/>
    <property type="match status" value="1"/>
</dbReference>
<feature type="chain" id="PRO_0000146291" description="Small ribosomal subunit protein uS12">
    <location>
        <begin position="1"/>
        <end position="123"/>
    </location>
</feature>
<feature type="region of interest" description="Disordered" evidence="3">
    <location>
        <begin position="1"/>
        <end position="22"/>
    </location>
</feature>
<feature type="region of interest" description="Disordered" evidence="3">
    <location>
        <begin position="100"/>
        <end position="123"/>
    </location>
</feature>
<feature type="compositionally biased region" description="Basic residues" evidence="3">
    <location>
        <begin position="111"/>
        <end position="123"/>
    </location>
</feature>
<feature type="modified residue" description="3-methylthioaspartic acid" evidence="1">
    <location>
        <position position="89"/>
    </location>
</feature>
<gene>
    <name evidence="2" type="primary">rpsL</name>
    <name type="ordered locus">PP_0449</name>
</gene>
<organism>
    <name type="scientific">Pseudomonas putida (strain ATCC 47054 / DSM 6125 / CFBP 8728 / NCIMB 11950 / KT2440)</name>
    <dbReference type="NCBI Taxonomy" id="160488"/>
    <lineage>
        <taxon>Bacteria</taxon>
        <taxon>Pseudomonadati</taxon>
        <taxon>Pseudomonadota</taxon>
        <taxon>Gammaproteobacteria</taxon>
        <taxon>Pseudomonadales</taxon>
        <taxon>Pseudomonadaceae</taxon>
        <taxon>Pseudomonas</taxon>
    </lineage>
</organism>
<evidence type="ECO:0000250" key="1"/>
<evidence type="ECO:0000255" key="2">
    <source>
        <dbReference type="HAMAP-Rule" id="MF_00403"/>
    </source>
</evidence>
<evidence type="ECO:0000256" key="3">
    <source>
        <dbReference type="SAM" id="MobiDB-lite"/>
    </source>
</evidence>
<evidence type="ECO:0000305" key="4"/>
<comment type="function">
    <text evidence="2">With S4 and S5 plays an important role in translational accuracy.</text>
</comment>
<comment type="function">
    <text evidence="2">Interacts with and stabilizes bases of the 16S rRNA that are involved in tRNA selection in the A site and with the mRNA backbone. Located at the interface of the 30S and 50S subunits, it traverses the body of the 30S subunit contacting proteins on the other side and probably holding the rRNA structure together. The combined cluster of proteins S8, S12 and S17 appears to hold together the shoulder and platform of the 30S subunit.</text>
</comment>
<comment type="subunit">
    <text evidence="2">Part of the 30S ribosomal subunit. Contacts proteins S8 and S17. May interact with IF1 in the 30S initiation complex.</text>
</comment>
<comment type="similarity">
    <text evidence="2">Belongs to the universal ribosomal protein uS12 family.</text>
</comment>
<name>RS12_PSEPK</name>
<accession>Q88QP0</accession>
<reference key="1">
    <citation type="journal article" date="2002" name="Environ. Microbiol.">
        <title>Complete genome sequence and comparative analysis of the metabolically versatile Pseudomonas putida KT2440.</title>
        <authorList>
            <person name="Nelson K.E."/>
            <person name="Weinel C."/>
            <person name="Paulsen I.T."/>
            <person name="Dodson R.J."/>
            <person name="Hilbert H."/>
            <person name="Martins dos Santos V.A.P."/>
            <person name="Fouts D.E."/>
            <person name="Gill S.R."/>
            <person name="Pop M."/>
            <person name="Holmes M."/>
            <person name="Brinkac L.M."/>
            <person name="Beanan M.J."/>
            <person name="DeBoy R.T."/>
            <person name="Daugherty S.C."/>
            <person name="Kolonay J.F."/>
            <person name="Madupu R."/>
            <person name="Nelson W.C."/>
            <person name="White O."/>
            <person name="Peterson J.D."/>
            <person name="Khouri H.M."/>
            <person name="Hance I."/>
            <person name="Chris Lee P."/>
            <person name="Holtzapple E.K."/>
            <person name="Scanlan D."/>
            <person name="Tran K."/>
            <person name="Moazzez A."/>
            <person name="Utterback T.R."/>
            <person name="Rizzo M."/>
            <person name="Lee K."/>
            <person name="Kosack D."/>
            <person name="Moestl D."/>
            <person name="Wedler H."/>
            <person name="Lauber J."/>
            <person name="Stjepandic D."/>
            <person name="Hoheisel J."/>
            <person name="Straetz M."/>
            <person name="Heim S."/>
            <person name="Kiewitz C."/>
            <person name="Eisen J.A."/>
            <person name="Timmis K.N."/>
            <person name="Duesterhoeft A."/>
            <person name="Tuemmler B."/>
            <person name="Fraser C.M."/>
        </authorList>
    </citation>
    <scope>NUCLEOTIDE SEQUENCE [LARGE SCALE GENOMIC DNA]</scope>
    <source>
        <strain>ATCC 47054 / DSM 6125 / CFBP 8728 / NCIMB 11950 / KT2440</strain>
    </source>
</reference>
<protein>
    <recommendedName>
        <fullName evidence="2">Small ribosomal subunit protein uS12</fullName>
    </recommendedName>
    <alternativeName>
        <fullName evidence="4">30S ribosomal protein S12</fullName>
    </alternativeName>
</protein>